<organism>
    <name type="scientific">Pelotomaculum thermopropionicum (strain DSM 13744 / JCM 10971 / SI)</name>
    <dbReference type="NCBI Taxonomy" id="370438"/>
    <lineage>
        <taxon>Bacteria</taxon>
        <taxon>Bacillati</taxon>
        <taxon>Bacillota</taxon>
        <taxon>Clostridia</taxon>
        <taxon>Eubacteriales</taxon>
        <taxon>Desulfotomaculaceae</taxon>
        <taxon>Pelotomaculum</taxon>
    </lineage>
</organism>
<sequence length="537" mass="59628">MAKFVFVTGGVVSSLGKGITAASLGRLLKSRGLKVAIQKLDPYINVDPGTMSPYQHGEVFVTEDGAETDLDLGHYERFIDINISRSCNVTTGGIYAAVINKERRGEYLGGTVQVIPHITNEIKERVLSVADDSLADVVITEIGGTVGDIESQPFLEAIRQLKGDLGRGNVVYIHVTLVPYLRAANELKTKPTQHSVKELRSMGIKPDIIVCRSELPLSKEMEEKLALFCDVEKEAVIQALDAPSIYEVPLMLEEEGLADIVLDKLGIKTGPPDLADWREMVERMKNLRYLTTIALVGKYVSLQDAYLSVAEALRHAGFYHGSAIEIKWINSEEVNCANTEDLLGSADGILVPGGFGDRGIEGKIEAIRFARERGIPFFGLCLGMQLAVVEFSRNVIGWRGANSTEFDPYTPYPVIDLLPEQRQLSDKGGTMRLGSYPCKLVPGTLAYRAYKKEIVEERHRHRYELNNAYRADLAAKGLVFSGTLPDGYLVEIIELPGHPWFLATQFHPEFKSRPNRPHPLFRDFIGAARKYKESRYS</sequence>
<evidence type="ECO:0000255" key="1">
    <source>
        <dbReference type="HAMAP-Rule" id="MF_01227"/>
    </source>
</evidence>
<comment type="function">
    <text evidence="1">Catalyzes the ATP-dependent amination of UTP to CTP with either L-glutamine or ammonia as the source of nitrogen. Regulates intracellular CTP levels through interactions with the four ribonucleotide triphosphates.</text>
</comment>
<comment type="catalytic activity">
    <reaction evidence="1">
        <text>UTP + L-glutamine + ATP + H2O = CTP + L-glutamate + ADP + phosphate + 2 H(+)</text>
        <dbReference type="Rhea" id="RHEA:26426"/>
        <dbReference type="ChEBI" id="CHEBI:15377"/>
        <dbReference type="ChEBI" id="CHEBI:15378"/>
        <dbReference type="ChEBI" id="CHEBI:29985"/>
        <dbReference type="ChEBI" id="CHEBI:30616"/>
        <dbReference type="ChEBI" id="CHEBI:37563"/>
        <dbReference type="ChEBI" id="CHEBI:43474"/>
        <dbReference type="ChEBI" id="CHEBI:46398"/>
        <dbReference type="ChEBI" id="CHEBI:58359"/>
        <dbReference type="ChEBI" id="CHEBI:456216"/>
        <dbReference type="EC" id="6.3.4.2"/>
    </reaction>
</comment>
<comment type="catalytic activity">
    <reaction evidence="1">
        <text>L-glutamine + H2O = L-glutamate + NH4(+)</text>
        <dbReference type="Rhea" id="RHEA:15889"/>
        <dbReference type="ChEBI" id="CHEBI:15377"/>
        <dbReference type="ChEBI" id="CHEBI:28938"/>
        <dbReference type="ChEBI" id="CHEBI:29985"/>
        <dbReference type="ChEBI" id="CHEBI:58359"/>
    </reaction>
</comment>
<comment type="catalytic activity">
    <reaction evidence="1">
        <text>UTP + NH4(+) + ATP = CTP + ADP + phosphate + 2 H(+)</text>
        <dbReference type="Rhea" id="RHEA:16597"/>
        <dbReference type="ChEBI" id="CHEBI:15378"/>
        <dbReference type="ChEBI" id="CHEBI:28938"/>
        <dbReference type="ChEBI" id="CHEBI:30616"/>
        <dbReference type="ChEBI" id="CHEBI:37563"/>
        <dbReference type="ChEBI" id="CHEBI:43474"/>
        <dbReference type="ChEBI" id="CHEBI:46398"/>
        <dbReference type="ChEBI" id="CHEBI:456216"/>
    </reaction>
</comment>
<comment type="activity regulation">
    <text evidence="1">Allosterically activated by GTP, when glutamine is the substrate; GTP has no effect on the reaction when ammonia is the substrate. The allosteric effector GTP functions by stabilizing the protein conformation that binds the tetrahedral intermediate(s) formed during glutamine hydrolysis. Inhibited by the product CTP, via allosteric rather than competitive inhibition.</text>
</comment>
<comment type="pathway">
    <text evidence="1">Pyrimidine metabolism; CTP biosynthesis via de novo pathway; CTP from UDP: step 2/2.</text>
</comment>
<comment type="subunit">
    <text evidence="1">Homotetramer.</text>
</comment>
<comment type="miscellaneous">
    <text evidence="1">CTPSs have evolved a hybrid strategy for distinguishing between UTP and CTP. The overlapping regions of the product feedback inhibitory and substrate sites recognize a common feature in both compounds, the triphosphate moiety. To differentiate isosteric substrate and product pyrimidine rings, an additional pocket far from the expected kinase/ligase catalytic site, specifically recognizes the cytosine and ribose portions of the product inhibitor.</text>
</comment>
<comment type="similarity">
    <text evidence="1">Belongs to the CTP synthase family.</text>
</comment>
<proteinExistence type="inferred from homology"/>
<reference key="1">
    <citation type="journal article" date="2008" name="Genome Res.">
        <title>The genome of Pelotomaculum thermopropionicum reveals niche-associated evolution in anaerobic microbiota.</title>
        <authorList>
            <person name="Kosaka T."/>
            <person name="Kato S."/>
            <person name="Shimoyama T."/>
            <person name="Ishii S."/>
            <person name="Abe T."/>
            <person name="Watanabe K."/>
        </authorList>
    </citation>
    <scope>NUCLEOTIDE SEQUENCE [LARGE SCALE GENOMIC DNA]</scope>
    <source>
        <strain>DSM 13744 / JCM 10971 / SI</strain>
    </source>
</reference>
<protein>
    <recommendedName>
        <fullName evidence="1">CTP synthase</fullName>
        <ecNumber evidence="1">6.3.4.2</ecNumber>
    </recommendedName>
    <alternativeName>
        <fullName evidence="1">Cytidine 5'-triphosphate synthase</fullName>
    </alternativeName>
    <alternativeName>
        <fullName evidence="1">Cytidine triphosphate synthetase</fullName>
        <shortName evidence="1">CTP synthetase</shortName>
        <shortName evidence="1">CTPS</shortName>
    </alternativeName>
    <alternativeName>
        <fullName evidence="1">UTP--ammonia ligase</fullName>
    </alternativeName>
</protein>
<dbReference type="EC" id="6.3.4.2" evidence="1"/>
<dbReference type="EMBL" id="AP009389">
    <property type="protein sequence ID" value="BAF61024.1"/>
    <property type="molecule type" value="Genomic_DNA"/>
</dbReference>
<dbReference type="SMR" id="A5CYA0"/>
<dbReference type="STRING" id="370438.PTH_2843"/>
<dbReference type="MEROPS" id="C26.964"/>
<dbReference type="KEGG" id="pth:PTH_2843"/>
<dbReference type="eggNOG" id="COG0504">
    <property type="taxonomic scope" value="Bacteria"/>
</dbReference>
<dbReference type="HOGENOM" id="CLU_011675_5_0_9"/>
<dbReference type="UniPathway" id="UPA00159">
    <property type="reaction ID" value="UER00277"/>
</dbReference>
<dbReference type="Proteomes" id="UP000006556">
    <property type="component" value="Chromosome"/>
</dbReference>
<dbReference type="GO" id="GO:0005829">
    <property type="term" value="C:cytosol"/>
    <property type="evidence" value="ECO:0007669"/>
    <property type="project" value="TreeGrafter"/>
</dbReference>
<dbReference type="GO" id="GO:0005524">
    <property type="term" value="F:ATP binding"/>
    <property type="evidence" value="ECO:0007669"/>
    <property type="project" value="UniProtKB-KW"/>
</dbReference>
<dbReference type="GO" id="GO:0003883">
    <property type="term" value="F:CTP synthase activity"/>
    <property type="evidence" value="ECO:0007669"/>
    <property type="project" value="UniProtKB-UniRule"/>
</dbReference>
<dbReference type="GO" id="GO:0004359">
    <property type="term" value="F:glutaminase activity"/>
    <property type="evidence" value="ECO:0007669"/>
    <property type="project" value="RHEA"/>
</dbReference>
<dbReference type="GO" id="GO:0042802">
    <property type="term" value="F:identical protein binding"/>
    <property type="evidence" value="ECO:0007669"/>
    <property type="project" value="TreeGrafter"/>
</dbReference>
<dbReference type="GO" id="GO:0046872">
    <property type="term" value="F:metal ion binding"/>
    <property type="evidence" value="ECO:0007669"/>
    <property type="project" value="UniProtKB-KW"/>
</dbReference>
<dbReference type="GO" id="GO:0044210">
    <property type="term" value="P:'de novo' CTP biosynthetic process"/>
    <property type="evidence" value="ECO:0007669"/>
    <property type="project" value="UniProtKB-UniRule"/>
</dbReference>
<dbReference type="GO" id="GO:0019856">
    <property type="term" value="P:pyrimidine nucleobase biosynthetic process"/>
    <property type="evidence" value="ECO:0007669"/>
    <property type="project" value="TreeGrafter"/>
</dbReference>
<dbReference type="CDD" id="cd03113">
    <property type="entry name" value="CTPS_N"/>
    <property type="match status" value="1"/>
</dbReference>
<dbReference type="CDD" id="cd01746">
    <property type="entry name" value="GATase1_CTP_Synthase"/>
    <property type="match status" value="1"/>
</dbReference>
<dbReference type="FunFam" id="3.40.50.300:FF:000009">
    <property type="entry name" value="CTP synthase"/>
    <property type="match status" value="1"/>
</dbReference>
<dbReference type="FunFam" id="3.40.50.880:FF:000002">
    <property type="entry name" value="CTP synthase"/>
    <property type="match status" value="1"/>
</dbReference>
<dbReference type="Gene3D" id="3.40.50.880">
    <property type="match status" value="1"/>
</dbReference>
<dbReference type="Gene3D" id="3.40.50.300">
    <property type="entry name" value="P-loop containing nucleotide triphosphate hydrolases"/>
    <property type="match status" value="1"/>
</dbReference>
<dbReference type="HAMAP" id="MF_01227">
    <property type="entry name" value="PyrG"/>
    <property type="match status" value="1"/>
</dbReference>
<dbReference type="InterPro" id="IPR029062">
    <property type="entry name" value="Class_I_gatase-like"/>
</dbReference>
<dbReference type="InterPro" id="IPR004468">
    <property type="entry name" value="CTP_synthase"/>
</dbReference>
<dbReference type="InterPro" id="IPR017456">
    <property type="entry name" value="CTP_synthase_N"/>
</dbReference>
<dbReference type="InterPro" id="IPR017926">
    <property type="entry name" value="GATASE"/>
</dbReference>
<dbReference type="InterPro" id="IPR033828">
    <property type="entry name" value="GATase1_CTP_Synthase"/>
</dbReference>
<dbReference type="InterPro" id="IPR027417">
    <property type="entry name" value="P-loop_NTPase"/>
</dbReference>
<dbReference type="NCBIfam" id="NF003792">
    <property type="entry name" value="PRK05380.1"/>
    <property type="match status" value="1"/>
</dbReference>
<dbReference type="NCBIfam" id="TIGR00337">
    <property type="entry name" value="PyrG"/>
    <property type="match status" value="1"/>
</dbReference>
<dbReference type="PANTHER" id="PTHR11550">
    <property type="entry name" value="CTP SYNTHASE"/>
    <property type="match status" value="1"/>
</dbReference>
<dbReference type="PANTHER" id="PTHR11550:SF0">
    <property type="entry name" value="CTP SYNTHASE-RELATED"/>
    <property type="match status" value="1"/>
</dbReference>
<dbReference type="Pfam" id="PF06418">
    <property type="entry name" value="CTP_synth_N"/>
    <property type="match status" value="1"/>
</dbReference>
<dbReference type="Pfam" id="PF00117">
    <property type="entry name" value="GATase"/>
    <property type="match status" value="1"/>
</dbReference>
<dbReference type="SUPFAM" id="SSF52317">
    <property type="entry name" value="Class I glutamine amidotransferase-like"/>
    <property type="match status" value="1"/>
</dbReference>
<dbReference type="SUPFAM" id="SSF52540">
    <property type="entry name" value="P-loop containing nucleoside triphosphate hydrolases"/>
    <property type="match status" value="1"/>
</dbReference>
<dbReference type="PROSITE" id="PS51273">
    <property type="entry name" value="GATASE_TYPE_1"/>
    <property type="match status" value="1"/>
</dbReference>
<gene>
    <name evidence="1" type="primary">pyrG</name>
    <name type="ordered locus">PTH_2843</name>
</gene>
<feature type="chain" id="PRO_1000164955" description="CTP synthase">
    <location>
        <begin position="1"/>
        <end position="537"/>
    </location>
</feature>
<feature type="domain" description="Glutamine amidotransferase type-1" evidence="1">
    <location>
        <begin position="292"/>
        <end position="534"/>
    </location>
</feature>
<feature type="region of interest" description="Amidoligase domain" evidence="1">
    <location>
        <begin position="1"/>
        <end position="267"/>
    </location>
</feature>
<feature type="active site" description="Nucleophile; for glutamine hydrolysis" evidence="1">
    <location>
        <position position="381"/>
    </location>
</feature>
<feature type="active site" evidence="1">
    <location>
        <position position="507"/>
    </location>
</feature>
<feature type="active site" evidence="1">
    <location>
        <position position="509"/>
    </location>
</feature>
<feature type="binding site" evidence="1">
    <location>
        <position position="13"/>
    </location>
    <ligand>
        <name>CTP</name>
        <dbReference type="ChEBI" id="CHEBI:37563"/>
        <note>allosteric inhibitor</note>
    </ligand>
</feature>
<feature type="binding site" evidence="1">
    <location>
        <position position="13"/>
    </location>
    <ligand>
        <name>UTP</name>
        <dbReference type="ChEBI" id="CHEBI:46398"/>
    </ligand>
</feature>
<feature type="binding site" evidence="1">
    <location>
        <begin position="14"/>
        <end position="19"/>
    </location>
    <ligand>
        <name>ATP</name>
        <dbReference type="ChEBI" id="CHEBI:30616"/>
    </ligand>
</feature>
<feature type="binding site" evidence="1">
    <location>
        <position position="54"/>
    </location>
    <ligand>
        <name>L-glutamine</name>
        <dbReference type="ChEBI" id="CHEBI:58359"/>
    </ligand>
</feature>
<feature type="binding site" evidence="1">
    <location>
        <position position="71"/>
    </location>
    <ligand>
        <name>ATP</name>
        <dbReference type="ChEBI" id="CHEBI:30616"/>
    </ligand>
</feature>
<feature type="binding site" evidence="1">
    <location>
        <position position="71"/>
    </location>
    <ligand>
        <name>Mg(2+)</name>
        <dbReference type="ChEBI" id="CHEBI:18420"/>
    </ligand>
</feature>
<feature type="binding site" evidence="1">
    <location>
        <position position="141"/>
    </location>
    <ligand>
        <name>Mg(2+)</name>
        <dbReference type="ChEBI" id="CHEBI:18420"/>
    </ligand>
</feature>
<feature type="binding site" evidence="1">
    <location>
        <begin position="148"/>
        <end position="150"/>
    </location>
    <ligand>
        <name>CTP</name>
        <dbReference type="ChEBI" id="CHEBI:37563"/>
        <note>allosteric inhibitor</note>
    </ligand>
</feature>
<feature type="binding site" evidence="1">
    <location>
        <begin position="188"/>
        <end position="193"/>
    </location>
    <ligand>
        <name>CTP</name>
        <dbReference type="ChEBI" id="CHEBI:37563"/>
        <note>allosteric inhibitor</note>
    </ligand>
</feature>
<feature type="binding site" evidence="1">
    <location>
        <begin position="188"/>
        <end position="193"/>
    </location>
    <ligand>
        <name>UTP</name>
        <dbReference type="ChEBI" id="CHEBI:46398"/>
    </ligand>
</feature>
<feature type="binding site" evidence="1">
    <location>
        <position position="224"/>
    </location>
    <ligand>
        <name>CTP</name>
        <dbReference type="ChEBI" id="CHEBI:37563"/>
        <note>allosteric inhibitor</note>
    </ligand>
</feature>
<feature type="binding site" evidence="1">
    <location>
        <position position="224"/>
    </location>
    <ligand>
        <name>UTP</name>
        <dbReference type="ChEBI" id="CHEBI:46398"/>
    </ligand>
</feature>
<feature type="binding site" evidence="1">
    <location>
        <position position="354"/>
    </location>
    <ligand>
        <name>L-glutamine</name>
        <dbReference type="ChEBI" id="CHEBI:58359"/>
    </ligand>
</feature>
<feature type="binding site" evidence="1">
    <location>
        <begin position="382"/>
        <end position="385"/>
    </location>
    <ligand>
        <name>L-glutamine</name>
        <dbReference type="ChEBI" id="CHEBI:58359"/>
    </ligand>
</feature>
<feature type="binding site" evidence="1">
    <location>
        <position position="405"/>
    </location>
    <ligand>
        <name>L-glutamine</name>
        <dbReference type="ChEBI" id="CHEBI:58359"/>
    </ligand>
</feature>
<feature type="binding site" evidence="1">
    <location>
        <position position="462"/>
    </location>
    <ligand>
        <name>L-glutamine</name>
        <dbReference type="ChEBI" id="CHEBI:58359"/>
    </ligand>
</feature>
<keyword id="KW-0067">ATP-binding</keyword>
<keyword id="KW-0315">Glutamine amidotransferase</keyword>
<keyword id="KW-0436">Ligase</keyword>
<keyword id="KW-0460">Magnesium</keyword>
<keyword id="KW-0479">Metal-binding</keyword>
<keyword id="KW-0547">Nucleotide-binding</keyword>
<keyword id="KW-0665">Pyrimidine biosynthesis</keyword>
<keyword id="KW-1185">Reference proteome</keyword>
<name>PYRG_PELTS</name>
<accession>A5CYA0</accession>